<gene>
    <name evidence="1" type="primary">clpP</name>
    <name type="ordered locus">SPCG_0696</name>
</gene>
<comment type="function">
    <text evidence="1">Cleaves peptides in various proteins in a process that requires ATP hydrolysis. Has a chymotrypsin-like activity. Plays a major role in the degradation of misfolded proteins.</text>
</comment>
<comment type="catalytic activity">
    <reaction evidence="1">
        <text>Hydrolysis of proteins to small peptides in the presence of ATP and magnesium. alpha-casein is the usual test substrate. In the absence of ATP, only oligopeptides shorter than five residues are hydrolyzed (such as succinyl-Leu-Tyr-|-NHMec, and Leu-Tyr-Leu-|-Tyr-Trp, in which cleavage of the -Tyr-|-Leu- and -Tyr-|-Trp bonds also occurs).</text>
        <dbReference type="EC" id="3.4.21.92"/>
    </reaction>
</comment>
<comment type="subunit">
    <text evidence="1">Fourteen ClpP subunits assemble into 2 heptameric rings which stack back to back to give a disk-like structure with a central cavity, resembling the structure of eukaryotic proteasomes.</text>
</comment>
<comment type="subcellular location">
    <subcellularLocation>
        <location evidence="1">Cytoplasm</location>
    </subcellularLocation>
</comment>
<comment type="similarity">
    <text evidence="1">Belongs to the peptidase S14 family.</text>
</comment>
<accession>B2INC9</accession>
<reference key="1">
    <citation type="journal article" date="2009" name="BMC Genomics">
        <title>Genome evolution driven by host adaptations results in a more virulent and antimicrobial-resistant Streptococcus pneumoniae serotype 14.</title>
        <authorList>
            <person name="Ding F."/>
            <person name="Tang P."/>
            <person name="Hsu M.-H."/>
            <person name="Cui P."/>
            <person name="Hu S."/>
            <person name="Yu J."/>
            <person name="Chiu C.-H."/>
        </authorList>
    </citation>
    <scope>NUCLEOTIDE SEQUENCE [LARGE SCALE GENOMIC DNA]</scope>
    <source>
        <strain>CGSP14</strain>
    </source>
</reference>
<keyword id="KW-0963">Cytoplasm</keyword>
<keyword id="KW-0378">Hydrolase</keyword>
<keyword id="KW-0645">Protease</keyword>
<keyword id="KW-0720">Serine protease</keyword>
<sequence>MIPVVIEQTSRGERSYDIYSRLLKDRIIMLTGPVEDNMANSVIAQLLFLDAQDSTKDIYLYVNTPGGSVSAGLAIVDTMNFIKADVQTIVMGMAASMGTVIASSGAKGKRFMLPNAEYMIHQPMGGTGGGTQQTDMAIAAEHLLKTRNTLEKILAENSGQSMEKVHADAERDNWMSAQETLEYGFIDEIMANNSLN</sequence>
<name>CLPP_STRPS</name>
<dbReference type="EC" id="3.4.21.92" evidence="1"/>
<dbReference type="EMBL" id="CP001033">
    <property type="protein sequence ID" value="ACB89948.1"/>
    <property type="molecule type" value="Genomic_DNA"/>
</dbReference>
<dbReference type="RefSeq" id="WP_000613477.1">
    <property type="nucleotide sequence ID" value="NC_010582.1"/>
</dbReference>
<dbReference type="SMR" id="B2INC9"/>
<dbReference type="MEROPS" id="S14.001"/>
<dbReference type="KEGG" id="spw:SPCG_0696"/>
<dbReference type="HOGENOM" id="CLU_058707_3_2_9"/>
<dbReference type="GO" id="GO:0005737">
    <property type="term" value="C:cytoplasm"/>
    <property type="evidence" value="ECO:0007669"/>
    <property type="project" value="UniProtKB-SubCell"/>
</dbReference>
<dbReference type="GO" id="GO:0009368">
    <property type="term" value="C:endopeptidase Clp complex"/>
    <property type="evidence" value="ECO:0007669"/>
    <property type="project" value="TreeGrafter"/>
</dbReference>
<dbReference type="GO" id="GO:0004176">
    <property type="term" value="F:ATP-dependent peptidase activity"/>
    <property type="evidence" value="ECO:0007669"/>
    <property type="project" value="InterPro"/>
</dbReference>
<dbReference type="GO" id="GO:0051117">
    <property type="term" value="F:ATPase binding"/>
    <property type="evidence" value="ECO:0007669"/>
    <property type="project" value="TreeGrafter"/>
</dbReference>
<dbReference type="GO" id="GO:0004252">
    <property type="term" value="F:serine-type endopeptidase activity"/>
    <property type="evidence" value="ECO:0007669"/>
    <property type="project" value="UniProtKB-UniRule"/>
</dbReference>
<dbReference type="GO" id="GO:0006515">
    <property type="term" value="P:protein quality control for misfolded or incompletely synthesized proteins"/>
    <property type="evidence" value="ECO:0007669"/>
    <property type="project" value="TreeGrafter"/>
</dbReference>
<dbReference type="CDD" id="cd07017">
    <property type="entry name" value="S14_ClpP_2"/>
    <property type="match status" value="1"/>
</dbReference>
<dbReference type="FunFam" id="3.90.226.10:FF:000014">
    <property type="entry name" value="ATP-dependent Clp protease proteolytic subunit"/>
    <property type="match status" value="1"/>
</dbReference>
<dbReference type="Gene3D" id="3.90.226.10">
    <property type="entry name" value="2-enoyl-CoA Hydratase, Chain A, domain 1"/>
    <property type="match status" value="1"/>
</dbReference>
<dbReference type="HAMAP" id="MF_00444">
    <property type="entry name" value="ClpP"/>
    <property type="match status" value="1"/>
</dbReference>
<dbReference type="InterPro" id="IPR001907">
    <property type="entry name" value="ClpP"/>
</dbReference>
<dbReference type="InterPro" id="IPR029045">
    <property type="entry name" value="ClpP/crotonase-like_dom_sf"/>
</dbReference>
<dbReference type="InterPro" id="IPR023562">
    <property type="entry name" value="ClpP/TepA"/>
</dbReference>
<dbReference type="InterPro" id="IPR033135">
    <property type="entry name" value="ClpP_His_AS"/>
</dbReference>
<dbReference type="InterPro" id="IPR018215">
    <property type="entry name" value="ClpP_Ser_AS"/>
</dbReference>
<dbReference type="NCBIfam" id="NF001368">
    <property type="entry name" value="PRK00277.1"/>
    <property type="match status" value="1"/>
</dbReference>
<dbReference type="NCBIfam" id="NF009205">
    <property type="entry name" value="PRK12553.1"/>
    <property type="match status" value="1"/>
</dbReference>
<dbReference type="PANTHER" id="PTHR10381">
    <property type="entry name" value="ATP-DEPENDENT CLP PROTEASE PROTEOLYTIC SUBUNIT"/>
    <property type="match status" value="1"/>
</dbReference>
<dbReference type="PANTHER" id="PTHR10381:SF70">
    <property type="entry name" value="ATP-DEPENDENT CLP PROTEASE PROTEOLYTIC SUBUNIT"/>
    <property type="match status" value="1"/>
</dbReference>
<dbReference type="Pfam" id="PF00574">
    <property type="entry name" value="CLP_protease"/>
    <property type="match status" value="1"/>
</dbReference>
<dbReference type="PRINTS" id="PR00127">
    <property type="entry name" value="CLPPROTEASEP"/>
</dbReference>
<dbReference type="SUPFAM" id="SSF52096">
    <property type="entry name" value="ClpP/crotonase"/>
    <property type="match status" value="1"/>
</dbReference>
<dbReference type="PROSITE" id="PS00382">
    <property type="entry name" value="CLP_PROTEASE_HIS"/>
    <property type="match status" value="1"/>
</dbReference>
<dbReference type="PROSITE" id="PS00381">
    <property type="entry name" value="CLP_PROTEASE_SER"/>
    <property type="match status" value="1"/>
</dbReference>
<evidence type="ECO:0000255" key="1">
    <source>
        <dbReference type="HAMAP-Rule" id="MF_00444"/>
    </source>
</evidence>
<protein>
    <recommendedName>
        <fullName evidence="1">ATP-dependent Clp protease proteolytic subunit</fullName>
        <ecNumber evidence="1">3.4.21.92</ecNumber>
    </recommendedName>
    <alternativeName>
        <fullName evidence="1">Endopeptidase Clp</fullName>
    </alternativeName>
</protein>
<organism>
    <name type="scientific">Streptococcus pneumoniae (strain CGSP14)</name>
    <dbReference type="NCBI Taxonomy" id="516950"/>
    <lineage>
        <taxon>Bacteria</taxon>
        <taxon>Bacillati</taxon>
        <taxon>Bacillota</taxon>
        <taxon>Bacilli</taxon>
        <taxon>Lactobacillales</taxon>
        <taxon>Streptococcaceae</taxon>
        <taxon>Streptococcus</taxon>
    </lineage>
</organism>
<proteinExistence type="inferred from homology"/>
<feature type="chain" id="PRO_1000189670" description="ATP-dependent Clp protease proteolytic subunit">
    <location>
        <begin position="1"/>
        <end position="196"/>
    </location>
</feature>
<feature type="active site" description="Nucleophile" evidence="1">
    <location>
        <position position="96"/>
    </location>
</feature>
<feature type="active site" evidence="1">
    <location>
        <position position="121"/>
    </location>
</feature>